<sequence>MWLQQRLKGLPGLLSSSWARRLLCLLGLLVLLLWFAGSGARRAAGGLQLLPWPHGEPGAAEPSACLEAATHAWRSLRERGEAVLLGPGVPSLVANGFLALDVVANRLWVTPGEREPAVAPDFVPFVQLRPLSALPEAGESVLLLREGLLRRVRCLQLGTSGPGPAAAGPGPASASGLLTGSGRDCVLLQEDFLAHRGRPHVYLQRIQLNNPTERVAALQTVGPTAGPAPRAFTSTLEKVGDHQFLLYSGRSPPVPTGLVHLVVVAAKKLVDRLQVAPRTQLDETVLWVVHVSGPLNPQVLKSKAAKELKVLQDLARKEMLELLEMPAAELLQDHQRLWAQLFSPGVEMKKITDAHTPSGLTVNLTLYYMLSCSPAPLLSPDLSHRERDQMESTLNYEDHCFSGHATMHAENLWPGRLSSVQQILQLWDLWRLTLQKRGCKGLVRAGAPGILQGMVLSFGGLQFTENHLQFQADPDVLHNSYALHGIRYKNDHINLAVLADAEGKPYLHVSVESRGQLVKIYACEAGCLDEPVELTSAPQGHTFSVMVTQPITPLLYISTDLTHLQDLRHTLHLKAILAHDEHMAQQDPGLPFLFWFSVASLITLFHLFLFKLIYNEYCGPGAKPFFRNKEDPSV</sequence>
<reference key="1">
    <citation type="submission" date="2006-01" db="EMBL/GenBank/DDBJ databases">
        <authorList>
            <consortium name="NIH - Mammalian Gene Collection (MGC) project"/>
        </authorList>
    </citation>
    <scope>NUCLEOTIDE SEQUENCE [LARGE SCALE MRNA]</scope>
    <source>
        <strain>Hereford</strain>
        <tissue>Hypothalamus</tissue>
    </source>
</reference>
<accession>Q2KHV9</accession>
<name>K2013_BOVIN</name>
<dbReference type="EMBL" id="BC112864">
    <property type="protein sequence ID" value="AAI12865.1"/>
    <property type="molecule type" value="mRNA"/>
</dbReference>
<dbReference type="RefSeq" id="NP_001039407.1">
    <property type="nucleotide sequence ID" value="NM_001045942.2"/>
</dbReference>
<dbReference type="RefSeq" id="XP_059731280.1">
    <property type="nucleotide sequence ID" value="XM_059875297.1"/>
</dbReference>
<dbReference type="FunCoup" id="Q2KHV9">
    <property type="interactions" value="3074"/>
</dbReference>
<dbReference type="STRING" id="9913.ENSBTAP00000025834"/>
<dbReference type="GlyGen" id="Q2KHV9">
    <property type="glycosylation" value="1 site"/>
</dbReference>
<dbReference type="PaxDb" id="9913-ENSBTAP00000025834"/>
<dbReference type="GeneID" id="506454"/>
<dbReference type="KEGG" id="bta:506454"/>
<dbReference type="CTD" id="90231"/>
<dbReference type="VEuPathDB" id="HostDB:ENSBTAG00000019388"/>
<dbReference type="eggNOG" id="KOG3778">
    <property type="taxonomic scope" value="Eukaryota"/>
</dbReference>
<dbReference type="InParanoid" id="Q2KHV9"/>
<dbReference type="OMA" id="LAEIHRW"/>
<dbReference type="OrthoDB" id="10017443at2759"/>
<dbReference type="Proteomes" id="UP000009136">
    <property type="component" value="Chromosome 16"/>
</dbReference>
<dbReference type="Bgee" id="ENSBTAG00000019388">
    <property type="expression patterns" value="Expressed in corpus epididymis and 105 other cell types or tissues"/>
</dbReference>
<dbReference type="GO" id="GO:0016020">
    <property type="term" value="C:membrane"/>
    <property type="evidence" value="ECO:0007669"/>
    <property type="project" value="UniProtKB-SubCell"/>
</dbReference>
<dbReference type="InterPro" id="IPR018795">
    <property type="entry name" value="K2013-like"/>
</dbReference>
<dbReference type="PANTHER" id="PTHR31386:SF2">
    <property type="entry name" value="SIMILAR TO RIKEN CDNA 2510039O18"/>
    <property type="match status" value="1"/>
</dbReference>
<dbReference type="PANTHER" id="PTHR31386">
    <property type="entry name" value="UNCHARACTERIZED PROTEIN KIAA2013"/>
    <property type="match status" value="1"/>
</dbReference>
<dbReference type="Pfam" id="PF10222">
    <property type="entry name" value="DUF2152"/>
    <property type="match status" value="1"/>
</dbReference>
<protein>
    <recommendedName>
        <fullName>Uncharacterized protein KIAA2013 homolog</fullName>
    </recommendedName>
</protein>
<comment type="subcellular location">
    <subcellularLocation>
        <location evidence="2">Membrane</location>
        <topology evidence="2">Single-pass type I membrane protein</topology>
    </subcellularLocation>
</comment>
<keyword id="KW-0325">Glycoprotein</keyword>
<keyword id="KW-0472">Membrane</keyword>
<keyword id="KW-1185">Reference proteome</keyword>
<keyword id="KW-0732">Signal</keyword>
<keyword id="KW-0812">Transmembrane</keyword>
<keyword id="KW-1133">Transmembrane helix</keyword>
<evidence type="ECO:0000255" key="1"/>
<evidence type="ECO:0000305" key="2"/>
<organism>
    <name type="scientific">Bos taurus</name>
    <name type="common">Bovine</name>
    <dbReference type="NCBI Taxonomy" id="9913"/>
    <lineage>
        <taxon>Eukaryota</taxon>
        <taxon>Metazoa</taxon>
        <taxon>Chordata</taxon>
        <taxon>Craniata</taxon>
        <taxon>Vertebrata</taxon>
        <taxon>Euteleostomi</taxon>
        <taxon>Mammalia</taxon>
        <taxon>Eutheria</taxon>
        <taxon>Laurasiatheria</taxon>
        <taxon>Artiodactyla</taxon>
        <taxon>Ruminantia</taxon>
        <taxon>Pecora</taxon>
        <taxon>Bovidae</taxon>
        <taxon>Bovinae</taxon>
        <taxon>Bos</taxon>
    </lineage>
</organism>
<feature type="signal peptide" evidence="1">
    <location>
        <begin position="1"/>
        <end position="40"/>
    </location>
</feature>
<feature type="chain" id="PRO_0000293467" description="Uncharacterized protein KIAA2013 homolog">
    <location>
        <begin position="41"/>
        <end position="634"/>
    </location>
</feature>
<feature type="topological domain" description="Extracellular" evidence="1">
    <location>
        <begin position="41"/>
        <end position="589"/>
    </location>
</feature>
<feature type="transmembrane region" description="Helical" evidence="1">
    <location>
        <begin position="590"/>
        <end position="610"/>
    </location>
</feature>
<feature type="topological domain" description="Cytoplasmic" evidence="1">
    <location>
        <begin position="611"/>
        <end position="634"/>
    </location>
</feature>
<feature type="glycosylation site" description="N-linked (GlcNAc...) asparagine" evidence="1">
    <location>
        <position position="363"/>
    </location>
</feature>
<proteinExistence type="evidence at transcript level"/>